<proteinExistence type="evidence at protein level"/>
<organismHost>
    <name type="scientific">Homo sapiens</name>
    <name type="common">Human</name>
    <dbReference type="NCBI Taxonomy" id="9606"/>
</organismHost>
<organismHost>
    <name type="scientific">Pan troglodytes</name>
    <name type="common">Chimpanzee</name>
    <dbReference type="NCBI Taxonomy" id="9598"/>
</organismHost>
<name>X_HBVF6</name>
<keyword id="KW-0002">3D-structure</keyword>
<keyword id="KW-1074">Activation of host NF-kappa-B by virus</keyword>
<keyword id="KW-0010">Activator</keyword>
<keyword id="KW-0053">Apoptosis</keyword>
<keyword id="KW-1035">Host cytoplasm</keyword>
<keyword id="KW-1079">Host G2/M cell cycle arrest by virus</keyword>
<keyword id="KW-1045">Host mitochondrion</keyword>
<keyword id="KW-1048">Host nucleus</keyword>
<keyword id="KW-0945">Host-virus interaction</keyword>
<keyword id="KW-1121">Modulation of host cell cycle by virus</keyword>
<keyword id="KW-0804">Transcription</keyword>
<keyword id="KW-0805">Transcription regulation</keyword>
<comment type="function">
    <text evidence="1">Multifunctional protein that plays a role in silencing host antiviral defenses and promoting viral transcription. Does not seem to be essential for HBV infection. May be directly involved in development of cirrhosis and liver cancer (hepatocellular carcinoma). Most of cytosolic activities involve modulation of cytosolic calcium. The effect on apoptosis is controversial depending on the cell types in which the studies have been conducted. May induce apoptosis by localizing in mitochondria and causing loss of mitochondrial membrane potential. May also modulate apoptosis by binding host CFLAR, a key regulator of the death-inducing signaling complex (DISC). Promotes viral transcription by using the host E3 ubiquitin ligase DDB1 to target the SMC5-SMC6 complex to proteasomal degradation. This host complex would otherwise bind to viral episomal DNA, and prevents its transcription. Moderately stimulates transcription of many different viral and cellular transcription elements. Promoters and enhancers stimulated by HBx contain DNA binding sites for NF-kappa-B, AP-1, AP-2, c-EBP, ATF/CREB, or the calcium-activated factor NF-AT.</text>
</comment>
<comment type="subunit">
    <text evidence="1">May form homodimer. May interact with host CEBPA, CFLAR, CREB1, DDB1, E4F1, HBXIP, HSPD1/HSP60, NFKBIA, POLR2E and SMAD4. Interacts with host SMC5-SMC6 complex and induces its degradation. Interacts with host TRPC4AP; leading to prevent ubiquitination of TRPC4AP. Interacts with host PLSCR1; this interaction promotes ubiquitination and degradation of HBx and impairs HBx-mediated cell proliferation.</text>
</comment>
<comment type="subcellular location">
    <subcellularLocation>
        <location evidence="1">Host cytoplasm</location>
    </subcellularLocation>
    <subcellularLocation>
        <location evidence="1">Host nucleus</location>
    </subcellularLocation>
    <subcellularLocation>
        <location evidence="1">Host mitochondrion</location>
    </subcellularLocation>
    <text evidence="1">Mainly cytoplasmic as only a fraction is detected in the nucleus. In cytoplasm, a minor fraction associates with mitochondria or proteasomes.</text>
</comment>
<comment type="PTM">
    <text evidence="1">A fraction may be phosphorylated in insect cells and HepG2 cells, a human hepatoblastoma cell line. Phosphorylated in vitro by host protein kinase C or mitogen-activated protein kinase. N-acetylated in insect cells.</text>
</comment>
<comment type="similarity">
    <text evidence="1">Belongs to the orthohepadnavirus protein X family.</text>
</comment>
<comment type="caution">
    <text>Transcriptional activities should be taken with a grain of salt. As of 2007, all studies demonstrating in vivo interaction between protein X and transcriptional components were performed with significant overexpression of both proteins and in the absence of viral infection.</text>
</comment>
<dbReference type="EMBL" id="X75663">
    <property type="protein sequence ID" value="CAA53352.1"/>
    <property type="molecule type" value="Genomic_DNA"/>
</dbReference>
<dbReference type="PDB" id="8GTX">
    <property type="method" value="X-ray"/>
    <property type="resolution" value="1.80 A"/>
    <property type="chains" value="B=2-21"/>
</dbReference>
<dbReference type="PDBsum" id="8GTX"/>
<dbReference type="SMR" id="Q69607"/>
<dbReference type="Proteomes" id="UP000007406">
    <property type="component" value="Genome"/>
</dbReference>
<dbReference type="GO" id="GO:0033650">
    <property type="term" value="C:host cell mitochondrion"/>
    <property type="evidence" value="ECO:0007669"/>
    <property type="project" value="UniProtKB-SubCell"/>
</dbReference>
<dbReference type="GO" id="GO:0042025">
    <property type="term" value="C:host cell nucleus"/>
    <property type="evidence" value="ECO:0007669"/>
    <property type="project" value="UniProtKB-SubCell"/>
</dbReference>
<dbReference type="GO" id="GO:0006351">
    <property type="term" value="P:DNA-templated transcription"/>
    <property type="evidence" value="ECO:0007669"/>
    <property type="project" value="UniProtKB-UniRule"/>
</dbReference>
<dbReference type="GO" id="GO:0085033">
    <property type="term" value="P:symbiont-mediated activation of host NF-kappaB cascade"/>
    <property type="evidence" value="ECO:0007669"/>
    <property type="project" value="UniProtKB-UniRule"/>
</dbReference>
<dbReference type="GO" id="GO:0039592">
    <property type="term" value="P:symbiont-mediated arrest of host cell cycle during G2/M transition"/>
    <property type="evidence" value="ECO:0007669"/>
    <property type="project" value="UniProtKB-UniRule"/>
</dbReference>
<dbReference type="GO" id="GO:0019079">
    <property type="term" value="P:viral genome replication"/>
    <property type="evidence" value="ECO:0007669"/>
    <property type="project" value="UniProtKB-UniRule"/>
</dbReference>
<dbReference type="HAMAP" id="MF_04074">
    <property type="entry name" value="HBV_X"/>
    <property type="match status" value="1"/>
</dbReference>
<dbReference type="InterPro" id="IPR000236">
    <property type="entry name" value="Transactivation_prot_X"/>
</dbReference>
<dbReference type="Pfam" id="PF00739">
    <property type="entry name" value="X"/>
    <property type="match status" value="1"/>
</dbReference>
<reference key="1">
    <citation type="journal article" date="1994" name="Virology">
        <title>Complete genomes, phylogenetic relatedness, and structural proteins of six strains of the hepatitis B virus, four of which represent two new genotypes.</title>
        <authorList>
            <person name="Norder H."/>
            <person name="Courouce A.M."/>
            <person name="Magnius L.O."/>
        </authorList>
    </citation>
    <scope>NUCLEOTIDE SEQUENCE [GENOMIC DNA]</scope>
</reference>
<reference key="2">
    <citation type="journal article" date="2004" name="J. Virol.">
        <title>The enigmatic X gene of hepatitis B virus.</title>
        <authorList>
            <person name="Bouchard M.J."/>
            <person name="Schneider R.J."/>
        </authorList>
    </citation>
    <scope>REVIEW</scope>
</reference>
<reference key="3">
    <citation type="journal article" date="2006" name="Cancer Sci.">
        <title>Molecular functions and biological roles of hepatitis B virus x protein.</title>
        <authorList>
            <person name="Tang H."/>
            <person name="Oishi N."/>
            <person name="Kaneko S."/>
            <person name="Murakami S."/>
        </authorList>
    </citation>
    <scope>REVIEW</scope>
</reference>
<sequence length="154" mass="16563">MAARLCCQLDPARDVLCLRPVGAESSGRTLPGSLGAVPPPSSSAVPADNGSHLSLRGLPVCSFSSAGPCALRFTSARRMETTVNAPWSLPTVLHKRTLGLSGRSMTWIEDYIKDCVFKDWEELGEEIRLKVFVLGGCRHKLVCSPAPCNFFTSA</sequence>
<accession>Q69607</accession>
<evidence type="ECO:0000255" key="1">
    <source>
        <dbReference type="HAMAP-Rule" id="MF_04074"/>
    </source>
</evidence>
<evidence type="ECO:0000256" key="2">
    <source>
        <dbReference type="SAM" id="MobiDB-lite"/>
    </source>
</evidence>
<organism>
    <name type="scientific">Hepatitis B virus genotype F2 subtype adw4q (isolate Senegal/9203)</name>
    <name type="common">HBV-F</name>
    <dbReference type="NCBI Taxonomy" id="489503"/>
    <lineage>
        <taxon>Viruses</taxon>
        <taxon>Riboviria</taxon>
        <taxon>Pararnavirae</taxon>
        <taxon>Artverviricota</taxon>
        <taxon>Revtraviricetes</taxon>
        <taxon>Blubervirales</taxon>
        <taxon>Hepadnaviridae</taxon>
        <taxon>Orthohepadnavirus</taxon>
        <taxon>Hepatitis B virus</taxon>
        <taxon>hepatitis B virus genotype F</taxon>
    </lineage>
</organism>
<protein>
    <recommendedName>
        <fullName evidence="1">Protein X</fullName>
    </recommendedName>
    <alternativeName>
        <fullName evidence="1">HBx</fullName>
    </alternativeName>
    <alternativeName>
        <fullName evidence="1">Peptide X</fullName>
    </alternativeName>
    <alternativeName>
        <fullName evidence="1">pX</fullName>
    </alternativeName>
</protein>
<gene>
    <name evidence="1" type="primary">X</name>
</gene>
<feature type="chain" id="PRO_0000319920" description="Protein X">
    <location>
        <begin position="1"/>
        <end position="154"/>
    </location>
</feature>
<feature type="region of interest" description="Disordered" evidence="2">
    <location>
        <begin position="28"/>
        <end position="48"/>
    </location>
</feature>
<feature type="region of interest" description="Mitochondrial targeting sequence" evidence="1">
    <location>
        <begin position="68"/>
        <end position="117"/>
    </location>
</feature>
<feature type="compositionally biased region" description="Low complexity" evidence="2">
    <location>
        <begin position="30"/>
        <end position="46"/>
    </location>
</feature>